<sequence>MSAFTPASEVLLRHSDDFEQSRILFAGDLQDDLPARFECAASRAHTQQFHHWQALSRQMCDNVRFSLVAQASDVADCDTLIYYWPKNKPEAQFQLMNILSLMPSGVDVFVVGENRSGVRSAEPMLADYAPLNKVDSARRCGLYHGRLEKQPQFSLESWWAEYSIDGLTIKTLPGVFSRDGLDVGSQLLLSTLTPHTKGKVLDVGCGAGVLSAALASHSPKVRLTLCDVSAPAVEASRATLAANGLEGEVFASNVFSEVKGRFDMIISNPPFHDGMQTSLDAAQTLIRGAVRHLNSGGELRIVANAFLPYPKILDETFGFHEVIAQTGRFKVYRTVMTRQAKK</sequence>
<proteinExistence type="inferred from homology"/>
<reference key="1">
    <citation type="submission" date="2007-11" db="EMBL/GenBank/DDBJ databases">
        <authorList>
            <consortium name="The Salmonella enterica serovar Paratyphi B Genome Sequencing Project"/>
            <person name="McClelland M."/>
            <person name="Sanderson E.K."/>
            <person name="Porwollik S."/>
            <person name="Spieth J."/>
            <person name="Clifton W.S."/>
            <person name="Fulton R."/>
            <person name="Cordes M."/>
            <person name="Wollam A."/>
            <person name="Shah N."/>
            <person name="Pepin K."/>
            <person name="Bhonagiri V."/>
            <person name="Nash W."/>
            <person name="Johnson M."/>
            <person name="Thiruvilangam P."/>
            <person name="Wilson R."/>
        </authorList>
    </citation>
    <scope>NUCLEOTIDE SEQUENCE [LARGE SCALE GENOMIC DNA]</scope>
    <source>
        <strain>ATCC BAA-1250 / SPB7</strain>
    </source>
</reference>
<dbReference type="EC" id="2.1.1.172" evidence="1"/>
<dbReference type="EMBL" id="CP000886">
    <property type="protein sequence ID" value="ABX70998.1"/>
    <property type="molecule type" value="Genomic_DNA"/>
</dbReference>
<dbReference type="RefSeq" id="WP_001272264.1">
    <property type="nucleotide sequence ID" value="NC_010102.1"/>
</dbReference>
<dbReference type="SMR" id="A9N7C4"/>
<dbReference type="KEGG" id="spq:SPAB_05733"/>
<dbReference type="PATRIC" id="fig|1016998.12.peg.5372"/>
<dbReference type="HOGENOM" id="CLU_049581_0_1_6"/>
<dbReference type="BioCyc" id="SENT1016998:SPAB_RS23395-MONOMER"/>
<dbReference type="Proteomes" id="UP000008556">
    <property type="component" value="Chromosome"/>
</dbReference>
<dbReference type="GO" id="GO:0005737">
    <property type="term" value="C:cytoplasm"/>
    <property type="evidence" value="ECO:0007669"/>
    <property type="project" value="UniProtKB-SubCell"/>
</dbReference>
<dbReference type="GO" id="GO:0052914">
    <property type="term" value="F:16S rRNA (guanine(1207)-N(2))-methyltransferase activity"/>
    <property type="evidence" value="ECO:0007669"/>
    <property type="project" value="UniProtKB-EC"/>
</dbReference>
<dbReference type="GO" id="GO:0003676">
    <property type="term" value="F:nucleic acid binding"/>
    <property type="evidence" value="ECO:0007669"/>
    <property type="project" value="InterPro"/>
</dbReference>
<dbReference type="CDD" id="cd02440">
    <property type="entry name" value="AdoMet_MTases"/>
    <property type="match status" value="1"/>
</dbReference>
<dbReference type="FunFam" id="3.40.50.150:FF:000058">
    <property type="entry name" value="Ribosomal RNA small subunit methyltransferase C"/>
    <property type="match status" value="1"/>
</dbReference>
<dbReference type="Gene3D" id="3.40.50.150">
    <property type="entry name" value="Vaccinia Virus protein VP39"/>
    <property type="match status" value="2"/>
</dbReference>
<dbReference type="HAMAP" id="MF_01862">
    <property type="entry name" value="16SrRNA_methyltr_C"/>
    <property type="match status" value="1"/>
</dbReference>
<dbReference type="InterPro" id="IPR002052">
    <property type="entry name" value="DNA_methylase_N6_adenine_CS"/>
</dbReference>
<dbReference type="InterPro" id="IPR013675">
    <property type="entry name" value="Mtase_sm_N"/>
</dbReference>
<dbReference type="InterPro" id="IPR023543">
    <property type="entry name" value="rRNA_ssu_MeTfrase_C"/>
</dbReference>
<dbReference type="InterPro" id="IPR046977">
    <property type="entry name" value="RsmC/RlmG"/>
</dbReference>
<dbReference type="InterPro" id="IPR029063">
    <property type="entry name" value="SAM-dependent_MTases_sf"/>
</dbReference>
<dbReference type="InterPro" id="IPR007848">
    <property type="entry name" value="Small_mtfrase_dom"/>
</dbReference>
<dbReference type="NCBIfam" id="NF007023">
    <property type="entry name" value="PRK09489.1"/>
    <property type="match status" value="1"/>
</dbReference>
<dbReference type="PANTHER" id="PTHR47816">
    <property type="entry name" value="RIBOSOMAL RNA SMALL SUBUNIT METHYLTRANSFERASE C"/>
    <property type="match status" value="1"/>
</dbReference>
<dbReference type="PANTHER" id="PTHR47816:SF4">
    <property type="entry name" value="RIBOSOMAL RNA SMALL SUBUNIT METHYLTRANSFERASE C"/>
    <property type="match status" value="1"/>
</dbReference>
<dbReference type="Pfam" id="PF05175">
    <property type="entry name" value="MTS"/>
    <property type="match status" value="1"/>
</dbReference>
<dbReference type="Pfam" id="PF08468">
    <property type="entry name" value="MTS_N"/>
    <property type="match status" value="1"/>
</dbReference>
<dbReference type="SUPFAM" id="SSF53335">
    <property type="entry name" value="S-adenosyl-L-methionine-dependent methyltransferases"/>
    <property type="match status" value="1"/>
</dbReference>
<accession>A9N7C4</accession>
<organism>
    <name type="scientific">Salmonella paratyphi B (strain ATCC BAA-1250 / SPB7)</name>
    <dbReference type="NCBI Taxonomy" id="1016998"/>
    <lineage>
        <taxon>Bacteria</taxon>
        <taxon>Pseudomonadati</taxon>
        <taxon>Pseudomonadota</taxon>
        <taxon>Gammaproteobacteria</taxon>
        <taxon>Enterobacterales</taxon>
        <taxon>Enterobacteriaceae</taxon>
        <taxon>Salmonella</taxon>
    </lineage>
</organism>
<name>RSMC_SALPB</name>
<feature type="chain" id="PRO_0000369761" description="Ribosomal RNA small subunit methyltransferase C">
    <location>
        <begin position="1"/>
        <end position="342"/>
    </location>
</feature>
<gene>
    <name evidence="1" type="primary">rsmC</name>
    <name type="ordered locus">SPAB_05733</name>
</gene>
<comment type="function">
    <text evidence="1">Specifically methylates the guanine in position 1207 of 16S rRNA in the 30S particle.</text>
</comment>
<comment type="catalytic activity">
    <reaction evidence="1">
        <text>guanosine(1207) in 16S rRNA + S-adenosyl-L-methionine = N(2)-methylguanosine(1207) in 16S rRNA + S-adenosyl-L-homocysteine + H(+)</text>
        <dbReference type="Rhea" id="RHEA:42736"/>
        <dbReference type="Rhea" id="RHEA-COMP:10213"/>
        <dbReference type="Rhea" id="RHEA-COMP:10214"/>
        <dbReference type="ChEBI" id="CHEBI:15378"/>
        <dbReference type="ChEBI" id="CHEBI:57856"/>
        <dbReference type="ChEBI" id="CHEBI:59789"/>
        <dbReference type="ChEBI" id="CHEBI:74269"/>
        <dbReference type="ChEBI" id="CHEBI:74481"/>
        <dbReference type="EC" id="2.1.1.172"/>
    </reaction>
</comment>
<comment type="subunit">
    <text evidence="1">Monomer.</text>
</comment>
<comment type="subcellular location">
    <subcellularLocation>
        <location evidence="1">Cytoplasm</location>
    </subcellularLocation>
</comment>
<comment type="similarity">
    <text evidence="1">Belongs to the methyltransferase superfamily. RsmC family.</text>
</comment>
<keyword id="KW-0963">Cytoplasm</keyword>
<keyword id="KW-0489">Methyltransferase</keyword>
<keyword id="KW-0698">rRNA processing</keyword>
<keyword id="KW-0949">S-adenosyl-L-methionine</keyword>
<keyword id="KW-0808">Transferase</keyword>
<evidence type="ECO:0000255" key="1">
    <source>
        <dbReference type="HAMAP-Rule" id="MF_01862"/>
    </source>
</evidence>
<protein>
    <recommendedName>
        <fullName evidence="1">Ribosomal RNA small subunit methyltransferase C</fullName>
        <ecNumber evidence="1">2.1.1.172</ecNumber>
    </recommendedName>
    <alternativeName>
        <fullName evidence="1">16S rRNA m2G1207 methyltransferase</fullName>
    </alternativeName>
    <alternativeName>
        <fullName evidence="1">rRNA (guanine-N(2)-)-methyltransferase RsmC</fullName>
    </alternativeName>
</protein>